<evidence type="ECO:0000250" key="1">
    <source>
        <dbReference type="UniProtKB" id="Q53W83"/>
    </source>
</evidence>
<evidence type="ECO:0000250" key="2">
    <source>
        <dbReference type="UniProtKB" id="Q5GA22"/>
    </source>
</evidence>
<evidence type="ECO:0000269" key="3">
    <source>
    </source>
</evidence>
<evidence type="ECO:0000269" key="4">
    <source>
    </source>
</evidence>
<evidence type="ECO:0000269" key="5">
    <source>
    </source>
</evidence>
<evidence type="ECO:0000303" key="6">
    <source>
    </source>
</evidence>
<evidence type="ECO:0000305" key="7"/>
<evidence type="ECO:0000312" key="8">
    <source>
        <dbReference type="EMBL" id="AAP03418.1"/>
    </source>
</evidence>
<evidence type="ECO:0000312" key="9">
    <source>
        <dbReference type="EMBL" id="AAP44711.1"/>
    </source>
</evidence>
<evidence type="ECO:0000312" key="10">
    <source>
        <dbReference type="EMBL" id="ABF98765.1"/>
    </source>
</evidence>
<evidence type="ECO:0000312" key="11">
    <source>
        <dbReference type="EMBL" id="BAH92363.1"/>
    </source>
</evidence>
<proteinExistence type="evidence at transcript level"/>
<dbReference type="EC" id="2.7.1.64" evidence="2"/>
<dbReference type="EMBL" id="AY387483">
    <property type="protein sequence ID" value="AAR07075.1"/>
    <property type="molecule type" value="Genomic_DNA"/>
</dbReference>
<dbReference type="EMBL" id="EU366952">
    <property type="protein sequence ID" value="ACB38658.1"/>
    <property type="molecule type" value="mRNA"/>
</dbReference>
<dbReference type="EMBL" id="AC117988">
    <property type="protein sequence ID" value="AAP44711.1"/>
    <property type="status" value="ALT_SEQ"/>
    <property type="molecule type" value="Genomic_DNA"/>
</dbReference>
<dbReference type="EMBL" id="AC118133">
    <property type="protein sequence ID" value="AAP03418.1"/>
    <property type="molecule type" value="Genomic_DNA"/>
</dbReference>
<dbReference type="EMBL" id="DP000009">
    <property type="protein sequence ID" value="ABF98765.1"/>
    <property type="molecule type" value="Genomic_DNA"/>
</dbReference>
<dbReference type="EMBL" id="AP008209">
    <property type="protein sequence ID" value="BAH92363.1"/>
    <property type="molecule type" value="Genomic_DNA"/>
</dbReference>
<dbReference type="EMBL" id="AP014959">
    <property type="protein sequence ID" value="BAS86280.1"/>
    <property type="molecule type" value="Genomic_DNA"/>
</dbReference>
<dbReference type="RefSeq" id="XP_015627815.1">
    <property type="nucleotide sequence ID" value="XM_015772329.1"/>
</dbReference>
<dbReference type="SMR" id="Q84R36"/>
<dbReference type="FunCoup" id="Q84R36">
    <property type="interactions" value="70"/>
</dbReference>
<dbReference type="STRING" id="39947.Q84R36"/>
<dbReference type="PaxDb" id="39947-Q84R36"/>
<dbReference type="EnsemblPlants" id="Os03t0737701-01">
    <property type="protein sequence ID" value="Os03t0737701-01"/>
    <property type="gene ID" value="Os03g0737701"/>
</dbReference>
<dbReference type="Gramene" id="Os03t0737701-01">
    <property type="protein sequence ID" value="Os03t0737701-01"/>
    <property type="gene ID" value="Os03g0737701"/>
</dbReference>
<dbReference type="KEGG" id="dosa:Os03g0737701"/>
<dbReference type="eggNOG" id="KOG2855">
    <property type="taxonomic scope" value="Eukaryota"/>
</dbReference>
<dbReference type="HOGENOM" id="CLU_061466_0_0_1"/>
<dbReference type="InParanoid" id="Q84R36"/>
<dbReference type="OMA" id="ANWFGAQ"/>
<dbReference type="OrthoDB" id="497927at2759"/>
<dbReference type="Proteomes" id="UP000000763">
    <property type="component" value="Chromosome 3"/>
</dbReference>
<dbReference type="Proteomes" id="UP000059680">
    <property type="component" value="Chromosome 3"/>
</dbReference>
<dbReference type="GO" id="GO:0005524">
    <property type="term" value="F:ATP binding"/>
    <property type="evidence" value="ECO:0007669"/>
    <property type="project" value="UniProtKB-KW"/>
</dbReference>
<dbReference type="GO" id="GO:0019140">
    <property type="term" value="F:inositol 3-kinase activity"/>
    <property type="evidence" value="ECO:0000250"/>
    <property type="project" value="UniProtKB"/>
</dbReference>
<dbReference type="GO" id="GO:0010264">
    <property type="term" value="P:myo-inositol hexakisphosphate biosynthetic process"/>
    <property type="evidence" value="ECO:0000315"/>
    <property type="project" value="UniProtKB"/>
</dbReference>
<dbReference type="FunFam" id="3.40.1190.20:FF:000026">
    <property type="entry name" value="Inositol 3-kinase"/>
    <property type="match status" value="1"/>
</dbReference>
<dbReference type="Gene3D" id="3.40.1190.20">
    <property type="match status" value="1"/>
</dbReference>
<dbReference type="InterPro" id="IPR002173">
    <property type="entry name" value="Carboh/pur_kinase_PfkB_CS"/>
</dbReference>
<dbReference type="InterPro" id="IPR050306">
    <property type="entry name" value="PfkB_Carbo_kinase"/>
</dbReference>
<dbReference type="InterPro" id="IPR011611">
    <property type="entry name" value="PfkB_dom"/>
</dbReference>
<dbReference type="InterPro" id="IPR029056">
    <property type="entry name" value="Ribokinase-like"/>
</dbReference>
<dbReference type="PANTHER" id="PTHR43085">
    <property type="entry name" value="HEXOKINASE FAMILY MEMBER"/>
    <property type="match status" value="1"/>
</dbReference>
<dbReference type="PANTHER" id="PTHR43085:SF13">
    <property type="entry name" value="INOSITOL 3-KINASE"/>
    <property type="match status" value="1"/>
</dbReference>
<dbReference type="Pfam" id="PF00294">
    <property type="entry name" value="PfkB"/>
    <property type="match status" value="1"/>
</dbReference>
<dbReference type="SUPFAM" id="SSF53613">
    <property type="entry name" value="Ribokinase-like"/>
    <property type="match status" value="1"/>
</dbReference>
<dbReference type="PROSITE" id="PS00584">
    <property type="entry name" value="PFKB_KINASES_2"/>
    <property type="match status" value="1"/>
</dbReference>
<reference key="1">
    <citation type="journal article" date="2003" name="Proc. Natl. Acad. Sci. U.S.A.">
        <title>A complex history of rearrangement in an orthologous region of the maize, sorghum, and rice genomes.</title>
        <authorList>
            <person name="Ilic K."/>
            <person name="SanMiguel P.J."/>
            <person name="Bennetzen J.L."/>
        </authorList>
    </citation>
    <scope>NUCLEOTIDE SEQUENCE [GENOMIC DNA]</scope>
</reference>
<reference key="2">
    <citation type="journal article" date="2008" name="Theor. Appl. Genet.">
        <title>Isolation and characterization of a low phytic acid rice mutant reveals a mutation in the rice orthologue of maize MIK.</title>
        <authorList>
            <person name="Kim S.I."/>
            <person name="Andaya C.B."/>
            <person name="Newman J.W."/>
            <person name="Goyal S.S."/>
            <person name="Tai T.H."/>
        </authorList>
    </citation>
    <scope>NUCLEOTIDE SEQUENCE [MRNA]</scope>
    <scope>FUNCTION</scope>
    <scope>TISSUE SPECIFICITY</scope>
    <scope>DISRUPTION PHENOTYPE</scope>
    <source>
        <strain>cv. Nipponbare</strain>
    </source>
</reference>
<reference key="3">
    <citation type="journal article" date="2005" name="Genome Res.">
        <title>Sequence, annotation, and analysis of synteny between rice chromosome 3 and diverged grass species.</title>
        <authorList>
            <consortium name="The rice chromosome 3 sequencing consortium"/>
            <person name="Buell C.R."/>
            <person name="Yuan Q."/>
            <person name="Ouyang S."/>
            <person name="Liu J."/>
            <person name="Zhu W."/>
            <person name="Wang A."/>
            <person name="Maiti R."/>
            <person name="Haas B."/>
            <person name="Wortman J."/>
            <person name="Pertea M."/>
            <person name="Jones K.M."/>
            <person name="Kim M."/>
            <person name="Overton L."/>
            <person name="Tsitrin T."/>
            <person name="Fadrosh D."/>
            <person name="Bera J."/>
            <person name="Weaver B."/>
            <person name="Jin S."/>
            <person name="Johri S."/>
            <person name="Reardon M."/>
            <person name="Webb K."/>
            <person name="Hill J."/>
            <person name="Moffat K."/>
            <person name="Tallon L."/>
            <person name="Van Aken S."/>
            <person name="Lewis M."/>
            <person name="Utterback T."/>
            <person name="Feldblyum T."/>
            <person name="Zismann V."/>
            <person name="Iobst S."/>
            <person name="Hsiao J."/>
            <person name="de Vazeille A.R."/>
            <person name="Salzberg S.L."/>
            <person name="White O."/>
            <person name="Fraser C.M."/>
            <person name="Yu Y."/>
            <person name="Kim H."/>
            <person name="Rambo T."/>
            <person name="Currie J."/>
            <person name="Collura K."/>
            <person name="Kernodle-Thompson S."/>
            <person name="Wei F."/>
            <person name="Kudrna K."/>
            <person name="Ammiraju J.S.S."/>
            <person name="Luo M."/>
            <person name="Goicoechea J.L."/>
            <person name="Wing R.A."/>
            <person name="Henry D."/>
            <person name="Oates R."/>
            <person name="Palmer M."/>
            <person name="Pries G."/>
            <person name="Saski C."/>
            <person name="Simmons J."/>
            <person name="Soderlund C."/>
            <person name="Nelson W."/>
            <person name="de la Bastide M."/>
            <person name="Spiegel L."/>
            <person name="Nascimento L."/>
            <person name="Huang E."/>
            <person name="Preston R."/>
            <person name="Zutavern T."/>
            <person name="Palmer L."/>
            <person name="O'Shaughnessy A."/>
            <person name="Dike S."/>
            <person name="McCombie W.R."/>
            <person name="Minx P."/>
            <person name="Cordum H."/>
            <person name="Wilson R."/>
            <person name="Jin W."/>
            <person name="Lee H.R."/>
            <person name="Jiang J."/>
            <person name="Jackson S."/>
        </authorList>
    </citation>
    <scope>NUCLEOTIDE SEQUENCE [LARGE SCALE GENOMIC DNA]</scope>
    <source>
        <strain>cv. Nipponbare</strain>
    </source>
</reference>
<reference key="4">
    <citation type="journal article" date="2005" name="Nature">
        <title>The map-based sequence of the rice genome.</title>
        <authorList>
            <consortium name="International rice genome sequencing project (IRGSP)"/>
        </authorList>
    </citation>
    <scope>NUCLEOTIDE SEQUENCE [LARGE SCALE GENOMIC DNA]</scope>
    <source>
        <strain>cv. Nipponbare</strain>
    </source>
</reference>
<reference key="5">
    <citation type="journal article" date="2008" name="Nucleic Acids Res.">
        <title>The rice annotation project database (RAP-DB): 2008 update.</title>
        <authorList>
            <consortium name="The rice annotation project (RAP)"/>
        </authorList>
    </citation>
    <scope>GENOME REANNOTATION</scope>
    <source>
        <strain>cv. Nipponbare</strain>
    </source>
</reference>
<reference key="6">
    <citation type="journal article" date="2013" name="Rice">
        <title>Improvement of the Oryza sativa Nipponbare reference genome using next generation sequence and optical map data.</title>
        <authorList>
            <person name="Kawahara Y."/>
            <person name="de la Bastide M."/>
            <person name="Hamilton J.P."/>
            <person name="Kanamori H."/>
            <person name="McCombie W.R."/>
            <person name="Ouyang S."/>
            <person name="Schwartz D.C."/>
            <person name="Tanaka T."/>
            <person name="Wu J."/>
            <person name="Zhou S."/>
            <person name="Childs K.L."/>
            <person name="Davidson R.M."/>
            <person name="Lin H."/>
            <person name="Quesada-Ocampo L."/>
            <person name="Vaillancourt B."/>
            <person name="Sakai H."/>
            <person name="Lee S.S."/>
            <person name="Kim J."/>
            <person name="Numa H."/>
            <person name="Itoh T."/>
            <person name="Buell C.R."/>
            <person name="Matsumoto T."/>
        </authorList>
    </citation>
    <scope>GENOME REANNOTATION</scope>
    <source>
        <strain>cv. Nipponbare</strain>
    </source>
</reference>
<reference key="7">
    <citation type="journal article" date="2007" name="Theor. Appl. Genet.">
        <title>Generation and characterization of low phytic acid germplasm in rice (Oryza sativa L.).</title>
        <authorList>
            <person name="Liu Q.L."/>
            <person name="Xu X.H."/>
            <person name="Ren X.L."/>
            <person name="Fu H.W."/>
            <person name="Wu D.X."/>
            <person name="Shu Q.Y."/>
        </authorList>
    </citation>
    <scope>FUNCTION</scope>
    <scope>DISRUPTION PHENOTYPE</scope>
</reference>
<reference key="8">
    <citation type="journal article" date="2013" name="Theor. Appl. Genet.">
        <title>Characterization of OsMIK in a rice mutant with reduced phytate content reveals an insertion of a rearranged retrotransposon.</title>
        <authorList>
            <person name="Zhao H.J."/>
            <person name="Cui H.R."/>
            <person name="Xu X.H."/>
            <person name="Tan Y.Y."/>
            <person name="Fu J.J."/>
            <person name="Liu G.Z."/>
            <person name="Poirier Y."/>
            <person name="Shu Q.Y."/>
        </authorList>
    </citation>
    <scope>DISRUPTION PHENOTYPE</scope>
</reference>
<keyword id="KW-0067">ATP-binding</keyword>
<keyword id="KW-0418">Kinase</keyword>
<keyword id="KW-0547">Nucleotide-binding</keyword>
<keyword id="KW-1185">Reference proteome</keyword>
<keyword id="KW-0808">Transferase</keyword>
<feature type="chain" id="PRO_0000431867" description="Inositol 3-kinase">
    <location>
        <begin position="1"/>
        <end position="397"/>
    </location>
</feature>
<feature type="active site" description="Proton acceptor" evidence="1">
    <location>
        <position position="281"/>
    </location>
</feature>
<feature type="binding site" evidence="1">
    <location>
        <position position="228"/>
    </location>
    <ligand>
        <name>ATP</name>
        <dbReference type="ChEBI" id="CHEBI:30616"/>
    </ligand>
</feature>
<feature type="binding site" evidence="1">
    <location>
        <begin position="278"/>
        <end position="281"/>
    </location>
    <ligand>
        <name>ATP</name>
        <dbReference type="ChEBI" id="CHEBI:30616"/>
    </ligand>
</feature>
<feature type="binding site" evidence="1">
    <location>
        <position position="305"/>
    </location>
    <ligand>
        <name>ATP</name>
        <dbReference type="ChEBI" id="CHEBI:30616"/>
    </ligand>
</feature>
<name>MIK_ORYSJ</name>
<sequence length="397" mass="41540">MAPSPAAAMPLAAEPDEVVVEVEEEEERGVKGGGGVAGLDEVEGLVVGSYCHDVLLRGGRVVGETLGGAAAFVSNVLDAASPAGASLAVVSKVGHDFAYATAAAPARHPPVLCASPTTSFHARFSDDAASAHAPDRQLRRVHACDPIYPADLPDRRFAYGLAVGVAGEVLPETLERMIRLCRAVLVDAQALIRAFDGEAKGGGAVRHVALEATPYARLLPRVAFLKASSEEAPYVGVETARRRCCVIVTEGRDGCRLYWDGGEARVAPFPAVQVDPTGAGDSFLAGFASGLLWGLSATDAALLGNFFGAAAVSQVGVPTFDPKMLQAVKQILEKAVKRPCTHINGNTFTFQRSSMHDELHKSLQEAAMLVCEQKQANSPATDNGDVCSINELTSLPS</sequence>
<protein>
    <recommendedName>
        <fullName evidence="7">Inositol 3-kinase</fullName>
        <ecNumber evidence="2">2.7.1.64</ecNumber>
    </recommendedName>
    <alternativeName>
        <fullName evidence="6">Myo-inositol kinase</fullName>
        <shortName evidence="6">OsMIK</shortName>
    </alternativeName>
    <alternativeName>
        <fullName evidence="6">Protein LOW PHYTIC ACID</fullName>
    </alternativeName>
</protein>
<gene>
    <name evidence="7" type="primary">MIK</name>
    <name evidence="6" type="synonym">LPA</name>
    <name evidence="11" type="ordered locus">Os03g0737701</name>
    <name evidence="10" type="ordered locus">LOC_Os03g52760</name>
    <name evidence="9" type="ORF">OSJNBa0057G07.25</name>
    <name evidence="8" type="ORF">OSJNBb0016H12.26</name>
</gene>
<organism>
    <name type="scientific">Oryza sativa subsp. japonica</name>
    <name type="common">Rice</name>
    <dbReference type="NCBI Taxonomy" id="39947"/>
    <lineage>
        <taxon>Eukaryota</taxon>
        <taxon>Viridiplantae</taxon>
        <taxon>Streptophyta</taxon>
        <taxon>Embryophyta</taxon>
        <taxon>Tracheophyta</taxon>
        <taxon>Spermatophyta</taxon>
        <taxon>Magnoliopsida</taxon>
        <taxon>Liliopsida</taxon>
        <taxon>Poales</taxon>
        <taxon>Poaceae</taxon>
        <taxon>BOP clade</taxon>
        <taxon>Oryzoideae</taxon>
        <taxon>Oryzeae</taxon>
        <taxon>Oryzinae</taxon>
        <taxon>Oryza</taxon>
        <taxon>Oryza sativa</taxon>
    </lineage>
</organism>
<comment type="function">
    <text evidence="3 4">Kinase that phosphorylates myo-inositol to produce multiple myo-inositol monophosphates. Participates in phytic acid biosynthesis in developing seeds. Phytic acid is the primary storage form of phosphorus in cereal grains and other plant seeds.</text>
</comment>
<comment type="catalytic activity">
    <reaction evidence="2">
        <text>myo-inositol + ATP = 1D-myo-inositol 3-phosphate + ADP + H(+)</text>
        <dbReference type="Rhea" id="RHEA:21804"/>
        <dbReference type="ChEBI" id="CHEBI:15378"/>
        <dbReference type="ChEBI" id="CHEBI:17268"/>
        <dbReference type="ChEBI" id="CHEBI:30616"/>
        <dbReference type="ChEBI" id="CHEBI:58401"/>
        <dbReference type="ChEBI" id="CHEBI:456216"/>
        <dbReference type="EC" id="2.7.1.64"/>
    </reaction>
</comment>
<comment type="tissue specificity">
    <text evidence="4">Expressed in roots, leaf blade shoots, leaf sheath shoots and panicles.</text>
</comment>
<comment type="disruption phenotype">
    <text evidence="3 4 5">Strong reduction in seed phytic acid with a molar equivalent increase in inorganic phosphate. Strong increase in myo-inositol levels in seeds.</text>
</comment>
<comment type="similarity">
    <text evidence="7">Belongs to the carbohydrate kinase pfkB family.</text>
</comment>
<comment type="sequence caution" evidence="7">
    <conflict type="erroneous gene model prediction">
        <sequence resource="EMBL-CDS" id="AAP44711"/>
    </conflict>
</comment>
<accession>Q84R36</accession>
<accession>A0A0P0W3B4</accession>
<accession>Q7Y1F1</accession>